<accession>Q3JF19</accession>
<feature type="chain" id="PRO_0000255338" description="Glycerol-3-phosphate dehydrogenase [NAD(P)+]">
    <location>
        <begin position="1"/>
        <end position="344"/>
    </location>
</feature>
<feature type="active site" description="Proton acceptor" evidence="1">
    <location>
        <position position="202"/>
    </location>
</feature>
<feature type="binding site" evidence="1">
    <location>
        <position position="23"/>
    </location>
    <ligand>
        <name>NADPH</name>
        <dbReference type="ChEBI" id="CHEBI:57783"/>
    </ligand>
</feature>
<feature type="binding site" evidence="1">
    <location>
        <position position="24"/>
    </location>
    <ligand>
        <name>NADPH</name>
        <dbReference type="ChEBI" id="CHEBI:57783"/>
    </ligand>
</feature>
<feature type="binding site" evidence="1">
    <location>
        <position position="44"/>
    </location>
    <ligand>
        <name>NADPH</name>
        <dbReference type="ChEBI" id="CHEBI:57783"/>
    </ligand>
</feature>
<feature type="binding site" evidence="1">
    <location>
        <position position="118"/>
    </location>
    <ligand>
        <name>NADPH</name>
        <dbReference type="ChEBI" id="CHEBI:57783"/>
    </ligand>
</feature>
<feature type="binding site" evidence="1">
    <location>
        <position position="118"/>
    </location>
    <ligand>
        <name>sn-glycerol 3-phosphate</name>
        <dbReference type="ChEBI" id="CHEBI:57597"/>
    </ligand>
</feature>
<feature type="binding site" evidence="1">
    <location>
        <position position="147"/>
    </location>
    <ligand>
        <name>sn-glycerol 3-phosphate</name>
        <dbReference type="ChEBI" id="CHEBI:57597"/>
    </ligand>
</feature>
<feature type="binding site" evidence="1">
    <location>
        <position position="149"/>
    </location>
    <ligand>
        <name>sn-glycerol 3-phosphate</name>
        <dbReference type="ChEBI" id="CHEBI:57597"/>
    </ligand>
</feature>
<feature type="binding site" evidence="1">
    <location>
        <position position="151"/>
    </location>
    <ligand>
        <name>NADPH</name>
        <dbReference type="ChEBI" id="CHEBI:57783"/>
    </ligand>
</feature>
<feature type="binding site" evidence="1">
    <location>
        <position position="202"/>
    </location>
    <ligand>
        <name>sn-glycerol 3-phosphate</name>
        <dbReference type="ChEBI" id="CHEBI:57597"/>
    </ligand>
</feature>
<feature type="binding site" evidence="1">
    <location>
        <position position="255"/>
    </location>
    <ligand>
        <name>sn-glycerol 3-phosphate</name>
        <dbReference type="ChEBI" id="CHEBI:57597"/>
    </ligand>
</feature>
<feature type="binding site" evidence="1">
    <location>
        <position position="265"/>
    </location>
    <ligand>
        <name>sn-glycerol 3-phosphate</name>
        <dbReference type="ChEBI" id="CHEBI:57597"/>
    </ligand>
</feature>
<feature type="binding site" evidence="1">
    <location>
        <position position="266"/>
    </location>
    <ligand>
        <name>NADPH</name>
        <dbReference type="ChEBI" id="CHEBI:57783"/>
    </ligand>
</feature>
<feature type="binding site" evidence="1">
    <location>
        <position position="266"/>
    </location>
    <ligand>
        <name>sn-glycerol 3-phosphate</name>
        <dbReference type="ChEBI" id="CHEBI:57597"/>
    </ligand>
</feature>
<feature type="binding site" evidence="1">
    <location>
        <position position="267"/>
    </location>
    <ligand>
        <name>sn-glycerol 3-phosphate</name>
        <dbReference type="ChEBI" id="CHEBI:57597"/>
    </ligand>
</feature>
<feature type="binding site" evidence="1">
    <location>
        <position position="292"/>
    </location>
    <ligand>
        <name>NADPH</name>
        <dbReference type="ChEBI" id="CHEBI:57783"/>
    </ligand>
</feature>
<evidence type="ECO:0000255" key="1">
    <source>
        <dbReference type="HAMAP-Rule" id="MF_00394"/>
    </source>
</evidence>
<reference key="1">
    <citation type="journal article" date="2006" name="Appl. Environ. Microbiol.">
        <title>Complete genome sequence of the marine, chemolithoautotrophic, ammonia-oxidizing bacterium Nitrosococcus oceani ATCC 19707.</title>
        <authorList>
            <person name="Klotz M.G."/>
            <person name="Arp D.J."/>
            <person name="Chain P.S.G."/>
            <person name="El-Sheikh A.F."/>
            <person name="Hauser L.J."/>
            <person name="Hommes N.G."/>
            <person name="Larimer F.W."/>
            <person name="Malfatti S.A."/>
            <person name="Norton J.M."/>
            <person name="Poret-Peterson A.T."/>
            <person name="Vergez L.M."/>
            <person name="Ward B.B."/>
        </authorList>
    </citation>
    <scope>NUCLEOTIDE SEQUENCE [LARGE SCALE GENOMIC DNA]</scope>
    <source>
        <strain>ATCC 19707 / BCRC 17464 / JCM 30415 / NCIMB 11848 / C-107</strain>
    </source>
</reference>
<keyword id="KW-0963">Cytoplasm</keyword>
<keyword id="KW-0444">Lipid biosynthesis</keyword>
<keyword id="KW-0443">Lipid metabolism</keyword>
<keyword id="KW-0520">NAD</keyword>
<keyword id="KW-0521">NADP</keyword>
<keyword id="KW-0547">Nucleotide-binding</keyword>
<keyword id="KW-0560">Oxidoreductase</keyword>
<keyword id="KW-0594">Phospholipid biosynthesis</keyword>
<keyword id="KW-1208">Phospholipid metabolism</keyword>
<keyword id="KW-1185">Reference proteome</keyword>
<dbReference type="EC" id="1.1.1.94" evidence="1"/>
<dbReference type="EMBL" id="CP000127">
    <property type="protein sequence ID" value="ABA56577.1"/>
    <property type="molecule type" value="Genomic_DNA"/>
</dbReference>
<dbReference type="RefSeq" id="WP_002812028.1">
    <property type="nucleotide sequence ID" value="NC_007484.1"/>
</dbReference>
<dbReference type="SMR" id="Q3JF19"/>
<dbReference type="FunCoup" id="Q3JF19">
    <property type="interactions" value="483"/>
</dbReference>
<dbReference type="STRING" id="323261.Noc_0035"/>
<dbReference type="KEGG" id="noc:Noc_0035"/>
<dbReference type="eggNOG" id="COG0240">
    <property type="taxonomic scope" value="Bacteria"/>
</dbReference>
<dbReference type="HOGENOM" id="CLU_033449_0_2_6"/>
<dbReference type="InParanoid" id="Q3JF19"/>
<dbReference type="UniPathway" id="UPA00940"/>
<dbReference type="Proteomes" id="UP000006838">
    <property type="component" value="Chromosome"/>
</dbReference>
<dbReference type="GO" id="GO:0005829">
    <property type="term" value="C:cytosol"/>
    <property type="evidence" value="ECO:0007669"/>
    <property type="project" value="TreeGrafter"/>
</dbReference>
<dbReference type="GO" id="GO:0047952">
    <property type="term" value="F:glycerol-3-phosphate dehydrogenase [NAD(P)+] activity"/>
    <property type="evidence" value="ECO:0007669"/>
    <property type="project" value="UniProtKB-UniRule"/>
</dbReference>
<dbReference type="GO" id="GO:0051287">
    <property type="term" value="F:NAD binding"/>
    <property type="evidence" value="ECO:0007669"/>
    <property type="project" value="InterPro"/>
</dbReference>
<dbReference type="GO" id="GO:0005975">
    <property type="term" value="P:carbohydrate metabolic process"/>
    <property type="evidence" value="ECO:0007669"/>
    <property type="project" value="InterPro"/>
</dbReference>
<dbReference type="GO" id="GO:0046167">
    <property type="term" value="P:glycerol-3-phosphate biosynthetic process"/>
    <property type="evidence" value="ECO:0007669"/>
    <property type="project" value="UniProtKB-UniRule"/>
</dbReference>
<dbReference type="GO" id="GO:0046168">
    <property type="term" value="P:glycerol-3-phosphate catabolic process"/>
    <property type="evidence" value="ECO:0007669"/>
    <property type="project" value="InterPro"/>
</dbReference>
<dbReference type="GO" id="GO:0046474">
    <property type="term" value="P:glycerophospholipid biosynthetic process"/>
    <property type="evidence" value="ECO:0007669"/>
    <property type="project" value="TreeGrafter"/>
</dbReference>
<dbReference type="FunFam" id="1.10.1040.10:FF:000001">
    <property type="entry name" value="Glycerol-3-phosphate dehydrogenase [NAD(P)+]"/>
    <property type="match status" value="1"/>
</dbReference>
<dbReference type="FunFam" id="3.40.50.720:FF:000019">
    <property type="entry name" value="Glycerol-3-phosphate dehydrogenase [NAD(P)+]"/>
    <property type="match status" value="1"/>
</dbReference>
<dbReference type="Gene3D" id="1.10.1040.10">
    <property type="entry name" value="N-(1-d-carboxylethyl)-l-norvaline Dehydrogenase, domain 2"/>
    <property type="match status" value="1"/>
</dbReference>
<dbReference type="Gene3D" id="3.40.50.720">
    <property type="entry name" value="NAD(P)-binding Rossmann-like Domain"/>
    <property type="match status" value="1"/>
</dbReference>
<dbReference type="HAMAP" id="MF_00394">
    <property type="entry name" value="NAD_Glyc3P_dehydrog"/>
    <property type="match status" value="1"/>
</dbReference>
<dbReference type="InterPro" id="IPR008927">
    <property type="entry name" value="6-PGluconate_DH-like_C_sf"/>
</dbReference>
<dbReference type="InterPro" id="IPR013328">
    <property type="entry name" value="6PGD_dom2"/>
</dbReference>
<dbReference type="InterPro" id="IPR006168">
    <property type="entry name" value="G3P_DH_NAD-dep"/>
</dbReference>
<dbReference type="InterPro" id="IPR006109">
    <property type="entry name" value="G3P_DH_NAD-dep_C"/>
</dbReference>
<dbReference type="InterPro" id="IPR011128">
    <property type="entry name" value="G3P_DH_NAD-dep_N"/>
</dbReference>
<dbReference type="InterPro" id="IPR036291">
    <property type="entry name" value="NAD(P)-bd_dom_sf"/>
</dbReference>
<dbReference type="NCBIfam" id="NF000940">
    <property type="entry name" value="PRK00094.1-2"/>
    <property type="match status" value="1"/>
</dbReference>
<dbReference type="NCBIfam" id="NF000942">
    <property type="entry name" value="PRK00094.1-4"/>
    <property type="match status" value="1"/>
</dbReference>
<dbReference type="PANTHER" id="PTHR11728">
    <property type="entry name" value="GLYCEROL-3-PHOSPHATE DEHYDROGENASE"/>
    <property type="match status" value="1"/>
</dbReference>
<dbReference type="PANTHER" id="PTHR11728:SF1">
    <property type="entry name" value="GLYCEROL-3-PHOSPHATE DEHYDROGENASE [NAD(+)] 2, CHLOROPLASTIC"/>
    <property type="match status" value="1"/>
</dbReference>
<dbReference type="Pfam" id="PF07479">
    <property type="entry name" value="NAD_Gly3P_dh_C"/>
    <property type="match status" value="1"/>
</dbReference>
<dbReference type="Pfam" id="PF01210">
    <property type="entry name" value="NAD_Gly3P_dh_N"/>
    <property type="match status" value="1"/>
</dbReference>
<dbReference type="PIRSF" id="PIRSF000114">
    <property type="entry name" value="Glycerol-3-P_dh"/>
    <property type="match status" value="1"/>
</dbReference>
<dbReference type="PRINTS" id="PR00077">
    <property type="entry name" value="GPDHDRGNASE"/>
</dbReference>
<dbReference type="SUPFAM" id="SSF48179">
    <property type="entry name" value="6-phosphogluconate dehydrogenase C-terminal domain-like"/>
    <property type="match status" value="1"/>
</dbReference>
<dbReference type="SUPFAM" id="SSF51735">
    <property type="entry name" value="NAD(P)-binding Rossmann-fold domains"/>
    <property type="match status" value="1"/>
</dbReference>
<dbReference type="PROSITE" id="PS00957">
    <property type="entry name" value="NAD_G3PDH"/>
    <property type="match status" value="1"/>
</dbReference>
<gene>
    <name evidence="1" type="primary">gpsA</name>
    <name type="ordered locus">Noc_0035</name>
</gene>
<proteinExistence type="inferred from homology"/>
<protein>
    <recommendedName>
        <fullName evidence="1">Glycerol-3-phosphate dehydrogenase [NAD(P)+]</fullName>
        <ecNumber evidence="1">1.1.1.94</ecNumber>
    </recommendedName>
    <alternativeName>
        <fullName evidence="1">NAD(P)(+)-dependent glycerol-3-phosphate dehydrogenase</fullName>
    </alternativeName>
    <alternativeName>
        <fullName evidence="1">NAD(P)H-dependent dihydroxyacetone-phosphate reductase</fullName>
    </alternativeName>
</protein>
<organism>
    <name type="scientific">Nitrosococcus oceani (strain ATCC 19707 / BCRC 17464 / JCM 30415 / NCIMB 11848 / C-107)</name>
    <dbReference type="NCBI Taxonomy" id="323261"/>
    <lineage>
        <taxon>Bacteria</taxon>
        <taxon>Pseudomonadati</taxon>
        <taxon>Pseudomonadota</taxon>
        <taxon>Gammaproteobacteria</taxon>
        <taxon>Chromatiales</taxon>
        <taxon>Chromatiaceae</taxon>
        <taxon>Nitrosococcus</taxon>
    </lineage>
</organism>
<comment type="function">
    <text evidence="1">Catalyzes the reduction of the glycolytic intermediate dihydroxyacetone phosphate (DHAP) to sn-glycerol 3-phosphate (G3P), the key precursor for phospholipid synthesis.</text>
</comment>
<comment type="catalytic activity">
    <reaction evidence="1">
        <text>sn-glycerol 3-phosphate + NAD(+) = dihydroxyacetone phosphate + NADH + H(+)</text>
        <dbReference type="Rhea" id="RHEA:11092"/>
        <dbReference type="ChEBI" id="CHEBI:15378"/>
        <dbReference type="ChEBI" id="CHEBI:57540"/>
        <dbReference type="ChEBI" id="CHEBI:57597"/>
        <dbReference type="ChEBI" id="CHEBI:57642"/>
        <dbReference type="ChEBI" id="CHEBI:57945"/>
        <dbReference type="EC" id="1.1.1.94"/>
    </reaction>
    <physiologicalReaction direction="right-to-left" evidence="1">
        <dbReference type="Rhea" id="RHEA:11094"/>
    </physiologicalReaction>
</comment>
<comment type="catalytic activity">
    <reaction evidence="1">
        <text>sn-glycerol 3-phosphate + NADP(+) = dihydroxyacetone phosphate + NADPH + H(+)</text>
        <dbReference type="Rhea" id="RHEA:11096"/>
        <dbReference type="ChEBI" id="CHEBI:15378"/>
        <dbReference type="ChEBI" id="CHEBI:57597"/>
        <dbReference type="ChEBI" id="CHEBI:57642"/>
        <dbReference type="ChEBI" id="CHEBI:57783"/>
        <dbReference type="ChEBI" id="CHEBI:58349"/>
        <dbReference type="EC" id="1.1.1.94"/>
    </reaction>
    <physiologicalReaction direction="right-to-left" evidence="1">
        <dbReference type="Rhea" id="RHEA:11098"/>
    </physiologicalReaction>
</comment>
<comment type="pathway">
    <text evidence="1">Membrane lipid metabolism; glycerophospholipid metabolism.</text>
</comment>
<comment type="subcellular location">
    <subcellularLocation>
        <location evidence="1">Cytoplasm</location>
    </subcellularLocation>
</comment>
<comment type="similarity">
    <text evidence="1">Belongs to the NAD-dependent glycerol-3-phosphate dehydrogenase family.</text>
</comment>
<name>GPDA_NITOC</name>
<sequence>MALPVALQNDKENLRTLVVGGGSWGTALAILLARNRVPTLLWARDLAQVSAMIITRRNDRYLPQVPFPPSLEPITDLEGALSQTKQVLVAVPSCGFRPILERLAGHLSSHVPLIWATKGLEPGTGRLLHEVVLELLGSGWPMAVMSGPTFAHEVVAGLPTAVTVAATESEIATCFARSLHGDTFRVYTSDDLIGVQLGGAVKNVLAIAAGISDGLGFGANTRAALITRGLTELVRFALAWGGQRETLMGLSGLGDLVLTCTDDQSRNRRLGLALAQGKRLDEALTLIGQAVEGAAAAKVVVARAKQLAVEMPIAEQVYQVLYAGRHPRQAVEVLCRREQKPEYA</sequence>